<comment type="function">
    <text evidence="1">Arginine deiminase involved in an arginine synthetase pathway, which provides citrulline and ornithine, the precursors for proline biosynthesis (PubMed:38602916). Catalyzes the conversion of L-arginine to citrulline while conserving the energy of arginine deimination to generate ATP from ADP and free phosphate (PubMed:38602916). Is specific toward L-arginine and cannot use D-arginine, agmatine, guanidine, L-alanine-L-arginine dipeptide and L-arginine-L-alanine dipeptide (PubMed:38602916). Can also use CDP, GDP or UDP, with lower activity (38%, 8.4% and 13.3%, respectively) (PubMed:38602916). The enzyme can also catalyze the reverse reaction: the ATP-dependent generation of arginine from citrulline in a single reaction by using free ammonia, without the requirement of aspartic acid (PubMed:38602916). In vivo, most likely functions in the arginine catabolism to produce citrulline for proline biosynthesis while also generating ATP, but it can also contribute to arginine biosynthesis when the necessary precursors such as citrulline are abundant (PubMed:38602916).</text>
</comment>
<comment type="catalytic activity">
    <reaction evidence="1">
        <text>L-arginine + ADP + phosphate + H(+) = L-citrulline + NH4(+) + ATP</text>
        <dbReference type="Rhea" id="RHEA:79571"/>
        <dbReference type="ChEBI" id="CHEBI:15378"/>
        <dbReference type="ChEBI" id="CHEBI:28938"/>
        <dbReference type="ChEBI" id="CHEBI:30616"/>
        <dbReference type="ChEBI" id="CHEBI:32682"/>
        <dbReference type="ChEBI" id="CHEBI:43474"/>
        <dbReference type="ChEBI" id="CHEBI:57743"/>
        <dbReference type="ChEBI" id="CHEBI:456216"/>
    </reaction>
    <physiologicalReaction direction="left-to-right" evidence="1">
        <dbReference type="Rhea" id="RHEA:79572"/>
    </physiologicalReaction>
    <physiologicalReaction direction="right-to-left" evidence="1">
        <dbReference type="Rhea" id="RHEA:79573"/>
    </physiologicalReaction>
</comment>
<comment type="cofactor">
    <cofactor evidence="1">
        <name>Mg(2+)</name>
        <dbReference type="ChEBI" id="CHEBI:18420"/>
    </cofactor>
</comment>
<comment type="biophysicochemical properties">
    <kinetics>
        <KM evidence="1">2.3 mM for arginine</KM>
        <KM evidence="1">2.4 mM for citrulline</KM>
        <KM evidence="1">315 mM for ADP</KM>
        <KM evidence="1">1.2 mM for ATP</KM>
        <KM evidence="1">1.5 mM for phosphate</KM>
        <KM evidence="1">106 mM for ammonium sulfate</KM>
        <KM evidence="1">3.7 mM for NH(3)</KM>
        <Vmax evidence="1">33.8 umol/min/mg enzyme with arginine as substrate</Vmax>
        <Vmax evidence="1">24.7 umol/min/mg enzyme with citrulline as substrate</Vmax>
        <Vmax evidence="1">124.0 umol/min/mg enzyme with ADP as substrate</Vmax>
        <Vmax evidence="1">47.0 umol/min/mg enzyme with ATP as substrate</Vmax>
        <Vmax evidence="1">39.0 umol/min/mg enzyme with phosphate as substrate</Vmax>
        <Vmax evidence="1">74.0 umol/min/mg enzyme with ammonium sulfate as substrate</Vmax>
        <Vmax evidence="1">74.0 umol/min/mg enzyme with NH(3) as substrate</Vmax>
        <text evidence="1">kcat is 28.6 sec(-1) with arginine as substrate. kcat is 20.9 sec(-1) with citrulline as substrate. kcat is 105 sec(-1) with ADP as substrate. kcat is 40 sec(-1) with ATP as substrate. kcat is 33.0 sec(-1) with phosphate as substrate. kcat is 63 sec(-1) with ammonium sulfate as substrate. kcat is 63 sec(-1) with NH(3) as substrate.</text>
    </kinetics>
    <phDependence>
        <text evidence="1">Optimum pH is 7.5.</text>
    </phDependence>
</comment>
<comment type="pathway">
    <text evidence="3">Amino-acid biosynthesis; L-proline biosynthesis.</text>
</comment>
<comment type="pathway">
    <text evidence="3">Amino-acid degradation; L-arginine degradation.</text>
</comment>
<comment type="pathway">
    <text evidence="3">Amino-acid biosynthesis; L-arginine biosynthesis.</text>
</comment>
<comment type="subunit">
    <text evidence="1">Probably forms homotetramers and higher assemblies of tetramers.</text>
</comment>
<comment type="disruption phenotype">
    <text evidence="1">The deletion mutant cannot grow in the absence of proline in a medium based on amino acids (PubMed:38602916). In the presence of proline, the deletion mutant can grow, but it shows a decrease in growth rate, suggesting that the catabolism of arginine by this enzyme makes a relevant contribution in ATP generation in this medium (PubMed:38602916). The mutant, as the wild-type strain, cannot grow in this medium depleted of arginine (PubMed:38602916). The growth of the wild-type strain, but not the growth of the mutant, is partially restored in medium supplemented with 4 mM citrulline, indicating that this enzyme can contribute to arginine biosynthesis in vivo (PubMed:38602916).</text>
</comment>
<reference key="1">
    <citation type="journal article" date="2005" name="Genome Res.">
        <title>Complete genome sequence of the hyperthermophilic archaeon Thermococcus kodakaraensis KOD1 and comparison with Pyrococcus genomes.</title>
        <authorList>
            <person name="Fukui T."/>
            <person name="Atomi H."/>
            <person name="Kanai T."/>
            <person name="Matsumi R."/>
            <person name="Fujiwara S."/>
            <person name="Imanaka T."/>
        </authorList>
    </citation>
    <scope>NUCLEOTIDE SEQUENCE [LARGE SCALE GENOMIC DNA]</scope>
    <source>
        <strain>ATCC BAA-918 / JCM 12380 / KOD1</strain>
    </source>
</reference>
<reference key="2">
    <citation type="journal article" date="2024" name="Proc. Natl. Acad. Sci. U.S.A.">
        <title>An energy-conserving reaction in amino acid metabolism catalyzed by arginine synthetase.</title>
        <authorList>
            <person name="Michimori Y."/>
            <person name="Yokooji Y."/>
            <person name="Atomi H."/>
        </authorList>
    </citation>
    <scope>FUNCTION</scope>
    <scope>CATALYTIC ACTIVITY</scope>
    <scope>COFACTOR</scope>
    <scope>BIOPHYSICOCHEMICAL PROPERTIES</scope>
    <scope>PATHWAY</scope>
    <scope>SUBUNIT</scope>
    <scope>DISRUPTION PHENOTYPE</scope>
    <source>
        <strain>ATCC BAA-918 / JCM 12380 / KOD1</strain>
    </source>
</reference>
<organism>
    <name type="scientific">Thermococcus kodakarensis (strain ATCC BAA-918 / JCM 12380 / KOD1)</name>
    <name type="common">Pyrococcus kodakaraensis (strain KOD1)</name>
    <dbReference type="NCBI Taxonomy" id="69014"/>
    <lineage>
        <taxon>Archaea</taxon>
        <taxon>Methanobacteriati</taxon>
        <taxon>Methanobacteriota</taxon>
        <taxon>Thermococci</taxon>
        <taxon>Thermococcales</taxon>
        <taxon>Thermococcaceae</taxon>
        <taxon>Thermococcus</taxon>
    </lineage>
</organism>
<dbReference type="EC" id="6.3.-.-" evidence="1"/>
<dbReference type="EMBL" id="AP006878">
    <property type="protein sequence ID" value="BAD86389.1"/>
    <property type="molecule type" value="Genomic_DNA"/>
</dbReference>
<dbReference type="RefSeq" id="WP_011251150.1">
    <property type="nucleotide sequence ID" value="NC_006624.1"/>
</dbReference>
<dbReference type="STRING" id="69014.TK2200"/>
<dbReference type="EnsemblBacteria" id="BAD86389">
    <property type="protein sequence ID" value="BAD86389"/>
    <property type="gene ID" value="TK2200"/>
</dbReference>
<dbReference type="GeneID" id="78448740"/>
<dbReference type="KEGG" id="tko:TK2200"/>
<dbReference type="PATRIC" id="fig|69014.16.peg.2155"/>
<dbReference type="eggNOG" id="arCOG01229">
    <property type="taxonomic scope" value="Archaea"/>
</dbReference>
<dbReference type="HOGENOM" id="CLU_046378_0_0_2"/>
<dbReference type="InParanoid" id="Q5JHM5"/>
<dbReference type="OrthoDB" id="14509at2157"/>
<dbReference type="PhylomeDB" id="Q5JHM5"/>
<dbReference type="UniPathway" id="UPA00068"/>
<dbReference type="UniPathway" id="UPA00073"/>
<dbReference type="UniPathway" id="UPA00098"/>
<dbReference type="Proteomes" id="UP000000536">
    <property type="component" value="Chromosome"/>
</dbReference>
<dbReference type="GO" id="GO:0005524">
    <property type="term" value="F:ATP binding"/>
    <property type="evidence" value="ECO:0007669"/>
    <property type="project" value="UniProtKB-KW"/>
</dbReference>
<dbReference type="GO" id="GO:0016874">
    <property type="term" value="F:ligase activity"/>
    <property type="evidence" value="ECO:0007669"/>
    <property type="project" value="UniProtKB-KW"/>
</dbReference>
<dbReference type="GO" id="GO:0008652">
    <property type="term" value="P:amino acid biosynthetic process"/>
    <property type="evidence" value="ECO:0007669"/>
    <property type="project" value="UniProtKB-KW"/>
</dbReference>
<dbReference type="Gene3D" id="3.40.50.720">
    <property type="entry name" value="NAD(P)-binding Rossmann-like Domain"/>
    <property type="match status" value="1"/>
</dbReference>
<dbReference type="Gene3D" id="3.40.50.300">
    <property type="entry name" value="P-loop containing nucleotide triphosphate hydrolases"/>
    <property type="match status" value="1"/>
</dbReference>
<dbReference type="InterPro" id="IPR053199">
    <property type="entry name" value="cDPG_synthetase-like"/>
</dbReference>
<dbReference type="InterPro" id="IPR003495">
    <property type="entry name" value="CobW/HypB/UreG_nucleotide-bd"/>
</dbReference>
<dbReference type="InterPro" id="IPR027417">
    <property type="entry name" value="P-loop_NTPase"/>
</dbReference>
<dbReference type="PANTHER" id="PTHR42869">
    <property type="entry name" value="SLL0572 PROTEIN"/>
    <property type="match status" value="1"/>
</dbReference>
<dbReference type="PANTHER" id="PTHR42869:SF1">
    <property type="entry name" value="SLL0572 PROTEIN"/>
    <property type="match status" value="1"/>
</dbReference>
<dbReference type="Pfam" id="PF02492">
    <property type="entry name" value="cobW"/>
    <property type="match status" value="1"/>
</dbReference>
<dbReference type="SUPFAM" id="SSF52540">
    <property type="entry name" value="P-loop containing nucleoside triphosphate hydrolases"/>
    <property type="match status" value="1"/>
</dbReference>
<protein>
    <recommendedName>
        <fullName evidence="2">Arginine synthetase ArcE</fullName>
        <ecNumber evidence="1">6.3.-.-</ecNumber>
    </recommendedName>
    <alternativeName>
        <fullName evidence="2">ATP-forming L-arginine deiminase</fullName>
        <shortName evidence="2">ATP-forming ADI</shortName>
    </alternativeName>
</protein>
<feature type="chain" id="PRO_0000460652" description="Arginine synthetase ArcE">
    <location>
        <begin position="1"/>
        <end position="448"/>
    </location>
</feature>
<sequence>MAEKKKKRVLILGAAGRDFHNFNVFFRDNPEYEVVAFTATQIPDIEGRIYPPELAGELYPNGIPIWSEDDMEKIIKEHDIDVVVFAYSDVSHEHVMHLASRAHSAGADFWLLGPKSTMLKSSKPVVAVTAVRTGCGKSQTSRKVAQLLQEMGYKVVAIRHPMPYGDLRKQVVQRFATFEDLDKYECTIEEREEYEPYIERGMVVYAGVDYEKILREAEKEADIILWDGGNNDFPFYEPDLWIVVTDPHRPGHELKYHPGETNFRAADVIIINKIDTANRDDIQKVRESIEKVNPNATVIEAASPIFVDKPELIKGKRVLVVEDGPTLTHGGMKYGAGYVAAKKFGAAEIIDPRPYAVGSIIETYKKYPHLDVILPAMGYGKKQIKELEETINRADADVVIMGTPVDLRRFMNLNKPAVRVKYELEEIGQPKLKEVLEEWAKNCEKLKK</sequence>
<name>ARCE_THEKO</name>
<evidence type="ECO:0000269" key="1">
    <source>
    </source>
</evidence>
<evidence type="ECO:0000303" key="2">
    <source>
    </source>
</evidence>
<evidence type="ECO:0000305" key="3">
    <source>
    </source>
</evidence>
<evidence type="ECO:0000312" key="4">
    <source>
        <dbReference type="EMBL" id="BAD86389.1"/>
    </source>
</evidence>
<accession>Q5JHM5</accession>
<proteinExistence type="evidence at protein level"/>
<gene>
    <name evidence="2" type="primary">arcE</name>
    <name evidence="4" type="ordered locus">TK2200</name>
</gene>
<keyword id="KW-0028">Amino-acid biosynthesis</keyword>
<keyword id="KW-0067">ATP-binding</keyword>
<keyword id="KW-0436">Ligase</keyword>
<keyword id="KW-0460">Magnesium</keyword>
<keyword id="KW-0547">Nucleotide-binding</keyword>
<keyword id="KW-1185">Reference proteome</keyword>